<accession>C1CLK8</accession>
<protein>
    <recommendedName>
        <fullName evidence="1">ATP synthase subunit alpha</fullName>
        <ecNumber evidence="1">7.1.2.2</ecNumber>
    </recommendedName>
    <alternativeName>
        <fullName evidence="1">ATP synthase F1 sector subunit alpha</fullName>
    </alternativeName>
    <alternativeName>
        <fullName evidence="1">F-ATPase subunit alpha</fullName>
    </alternativeName>
</protein>
<reference key="1">
    <citation type="journal article" date="2010" name="Genome Biol.">
        <title>Structure and dynamics of the pan-genome of Streptococcus pneumoniae and closely related species.</title>
        <authorList>
            <person name="Donati C."/>
            <person name="Hiller N.L."/>
            <person name="Tettelin H."/>
            <person name="Muzzi A."/>
            <person name="Croucher N.J."/>
            <person name="Angiuoli S.V."/>
            <person name="Oggioni M."/>
            <person name="Dunning Hotopp J.C."/>
            <person name="Hu F.Z."/>
            <person name="Riley D.R."/>
            <person name="Covacci A."/>
            <person name="Mitchell T.J."/>
            <person name="Bentley S.D."/>
            <person name="Kilian M."/>
            <person name="Ehrlich G.D."/>
            <person name="Rappuoli R."/>
            <person name="Moxon E.R."/>
            <person name="Masignani V."/>
        </authorList>
    </citation>
    <scope>NUCLEOTIDE SEQUENCE [LARGE SCALE GENOMIC DNA]</scope>
    <source>
        <strain>P1031</strain>
    </source>
</reference>
<evidence type="ECO:0000255" key="1">
    <source>
        <dbReference type="HAMAP-Rule" id="MF_01346"/>
    </source>
</evidence>
<feature type="chain" id="PRO_1000166559" description="ATP synthase subunit alpha">
    <location>
        <begin position="1"/>
        <end position="501"/>
    </location>
</feature>
<feature type="binding site" evidence="1">
    <location>
        <begin position="169"/>
        <end position="176"/>
    </location>
    <ligand>
        <name>ATP</name>
        <dbReference type="ChEBI" id="CHEBI:30616"/>
    </ligand>
</feature>
<feature type="site" description="Required for activity" evidence="1">
    <location>
        <position position="362"/>
    </location>
</feature>
<gene>
    <name evidence="1" type="primary">atpA</name>
    <name type="ordered locus">SPP_1529</name>
</gene>
<comment type="function">
    <text evidence="1">Produces ATP from ADP in the presence of a proton gradient across the membrane. The alpha chain is a regulatory subunit.</text>
</comment>
<comment type="catalytic activity">
    <reaction evidence="1">
        <text>ATP + H2O + 4 H(+)(in) = ADP + phosphate + 5 H(+)(out)</text>
        <dbReference type="Rhea" id="RHEA:57720"/>
        <dbReference type="ChEBI" id="CHEBI:15377"/>
        <dbReference type="ChEBI" id="CHEBI:15378"/>
        <dbReference type="ChEBI" id="CHEBI:30616"/>
        <dbReference type="ChEBI" id="CHEBI:43474"/>
        <dbReference type="ChEBI" id="CHEBI:456216"/>
        <dbReference type="EC" id="7.1.2.2"/>
    </reaction>
</comment>
<comment type="subunit">
    <text evidence="1">F-type ATPases have 2 components, CF(1) - the catalytic core - and CF(0) - the membrane proton channel. CF(1) has five subunits: alpha(3), beta(3), gamma(1), delta(1), epsilon(1). CF(0) has three main subunits: a(1), b(2) and c(9-12). The alpha and beta chains form an alternating ring which encloses part of the gamma chain. CF(1) is attached to CF(0) by a central stalk formed by the gamma and epsilon chains, while a peripheral stalk is formed by the delta and b chains.</text>
</comment>
<comment type="subcellular location">
    <subcellularLocation>
        <location evidence="1">Cell membrane</location>
        <topology evidence="1">Peripheral membrane protein</topology>
    </subcellularLocation>
</comment>
<comment type="similarity">
    <text evidence="1">Belongs to the ATPase alpha/beta chains family.</text>
</comment>
<dbReference type="EC" id="7.1.2.2" evidence="1"/>
<dbReference type="EMBL" id="CP000920">
    <property type="protein sequence ID" value="ACO20819.1"/>
    <property type="molecule type" value="Genomic_DNA"/>
</dbReference>
<dbReference type="RefSeq" id="WP_000996646.1">
    <property type="nucleotide sequence ID" value="NC_012467.1"/>
</dbReference>
<dbReference type="SMR" id="C1CLK8"/>
<dbReference type="GeneID" id="45653251"/>
<dbReference type="KEGG" id="spp:SPP_1529"/>
<dbReference type="HOGENOM" id="CLU_010091_2_1_9"/>
<dbReference type="GO" id="GO:0005886">
    <property type="term" value="C:plasma membrane"/>
    <property type="evidence" value="ECO:0007669"/>
    <property type="project" value="UniProtKB-SubCell"/>
</dbReference>
<dbReference type="GO" id="GO:0045259">
    <property type="term" value="C:proton-transporting ATP synthase complex"/>
    <property type="evidence" value="ECO:0007669"/>
    <property type="project" value="UniProtKB-KW"/>
</dbReference>
<dbReference type="GO" id="GO:0043531">
    <property type="term" value="F:ADP binding"/>
    <property type="evidence" value="ECO:0007669"/>
    <property type="project" value="TreeGrafter"/>
</dbReference>
<dbReference type="GO" id="GO:0005524">
    <property type="term" value="F:ATP binding"/>
    <property type="evidence" value="ECO:0007669"/>
    <property type="project" value="UniProtKB-UniRule"/>
</dbReference>
<dbReference type="GO" id="GO:0046933">
    <property type="term" value="F:proton-transporting ATP synthase activity, rotational mechanism"/>
    <property type="evidence" value="ECO:0007669"/>
    <property type="project" value="UniProtKB-UniRule"/>
</dbReference>
<dbReference type="CDD" id="cd18113">
    <property type="entry name" value="ATP-synt_F1_alpha_C"/>
    <property type="match status" value="1"/>
</dbReference>
<dbReference type="CDD" id="cd18116">
    <property type="entry name" value="ATP-synt_F1_alpha_N"/>
    <property type="match status" value="1"/>
</dbReference>
<dbReference type="CDD" id="cd01132">
    <property type="entry name" value="F1-ATPase_alpha_CD"/>
    <property type="match status" value="1"/>
</dbReference>
<dbReference type="FunFam" id="1.20.150.20:FF:000001">
    <property type="entry name" value="ATP synthase subunit alpha"/>
    <property type="match status" value="1"/>
</dbReference>
<dbReference type="FunFam" id="2.40.30.20:FF:000001">
    <property type="entry name" value="ATP synthase subunit alpha"/>
    <property type="match status" value="1"/>
</dbReference>
<dbReference type="FunFam" id="3.40.50.300:FF:000002">
    <property type="entry name" value="ATP synthase subunit alpha"/>
    <property type="match status" value="1"/>
</dbReference>
<dbReference type="Gene3D" id="2.40.30.20">
    <property type="match status" value="1"/>
</dbReference>
<dbReference type="Gene3D" id="1.20.150.20">
    <property type="entry name" value="ATP synthase alpha/beta chain, C-terminal domain"/>
    <property type="match status" value="1"/>
</dbReference>
<dbReference type="Gene3D" id="3.40.50.300">
    <property type="entry name" value="P-loop containing nucleotide triphosphate hydrolases"/>
    <property type="match status" value="1"/>
</dbReference>
<dbReference type="HAMAP" id="MF_01346">
    <property type="entry name" value="ATP_synth_alpha_bact"/>
    <property type="match status" value="1"/>
</dbReference>
<dbReference type="InterPro" id="IPR023366">
    <property type="entry name" value="ATP_synth_asu-like_sf"/>
</dbReference>
<dbReference type="InterPro" id="IPR000793">
    <property type="entry name" value="ATP_synth_asu_C"/>
</dbReference>
<dbReference type="InterPro" id="IPR038376">
    <property type="entry name" value="ATP_synth_asu_C_sf"/>
</dbReference>
<dbReference type="InterPro" id="IPR033732">
    <property type="entry name" value="ATP_synth_F1_a_nt-bd_dom"/>
</dbReference>
<dbReference type="InterPro" id="IPR005294">
    <property type="entry name" value="ATP_synth_F1_asu"/>
</dbReference>
<dbReference type="InterPro" id="IPR004100">
    <property type="entry name" value="ATPase_F1/V1/A1_a/bsu_N"/>
</dbReference>
<dbReference type="InterPro" id="IPR036121">
    <property type="entry name" value="ATPase_F1/V1/A1_a/bsu_N_sf"/>
</dbReference>
<dbReference type="InterPro" id="IPR000194">
    <property type="entry name" value="ATPase_F1/V1/A1_a/bsu_nucl-bd"/>
</dbReference>
<dbReference type="InterPro" id="IPR027417">
    <property type="entry name" value="P-loop_NTPase"/>
</dbReference>
<dbReference type="NCBIfam" id="TIGR00962">
    <property type="entry name" value="atpA"/>
    <property type="match status" value="1"/>
</dbReference>
<dbReference type="NCBIfam" id="NF009884">
    <property type="entry name" value="PRK13343.1"/>
    <property type="match status" value="1"/>
</dbReference>
<dbReference type="PANTHER" id="PTHR48082">
    <property type="entry name" value="ATP SYNTHASE SUBUNIT ALPHA, MITOCHONDRIAL"/>
    <property type="match status" value="1"/>
</dbReference>
<dbReference type="PANTHER" id="PTHR48082:SF2">
    <property type="entry name" value="ATP SYNTHASE SUBUNIT ALPHA, MITOCHONDRIAL"/>
    <property type="match status" value="1"/>
</dbReference>
<dbReference type="Pfam" id="PF00006">
    <property type="entry name" value="ATP-synt_ab"/>
    <property type="match status" value="1"/>
</dbReference>
<dbReference type="Pfam" id="PF00306">
    <property type="entry name" value="ATP-synt_ab_C"/>
    <property type="match status" value="1"/>
</dbReference>
<dbReference type="Pfam" id="PF02874">
    <property type="entry name" value="ATP-synt_ab_N"/>
    <property type="match status" value="1"/>
</dbReference>
<dbReference type="PIRSF" id="PIRSF039088">
    <property type="entry name" value="F_ATPase_subunit_alpha"/>
    <property type="match status" value="1"/>
</dbReference>
<dbReference type="SUPFAM" id="SSF47917">
    <property type="entry name" value="C-terminal domain of alpha and beta subunits of F1 ATP synthase"/>
    <property type="match status" value="1"/>
</dbReference>
<dbReference type="SUPFAM" id="SSF50615">
    <property type="entry name" value="N-terminal domain of alpha and beta subunits of F1 ATP synthase"/>
    <property type="match status" value="1"/>
</dbReference>
<dbReference type="SUPFAM" id="SSF52540">
    <property type="entry name" value="P-loop containing nucleoside triphosphate hydrolases"/>
    <property type="match status" value="1"/>
</dbReference>
<sequence length="501" mass="54705">MAINAQEISALIKQQIENFKPNFDVTETGVVTYIGDGIARAHGLENVMSGELLNFENGSYGMAQNLESTDVGIIILGDFTDIREGDTIRRTGKIMEVPVGESLIGRVVDPLGRPVDGLGEIHTDKTRPVEAPAPGVMQRKSVSEPLQTGLKAIDALVPIGRGQRELIIGDRQTGKTTIAIDTILNQKDQDMICIYVAIGQKESTVRTQVETLRQYGALDYTIVVTASASQPSPLLFLAPYTGVAMAEEFMYQGKHVLIVYDDLSKQAVAYRELSLLLRRPPGREAFPGDVFYLHSRLLERSAKVSDELGGGSITALPFIETQAGDISAYIATNVISITDGQIFLGDGLFNAGIRPAIDAGSSVSRVGGSAQIKAMKKVAGTLRIDLASYRELEAFTKFGSDLDAATQAKLNRGRRTVEVLKQPVHKPLPVEKQVTILYALTHGFLDTVPVDDIVRFEEEFHTFFDAQHPEILETIRDTKDLPEEAVLDAAITEFLNQSSFQ</sequence>
<organism>
    <name type="scientific">Streptococcus pneumoniae (strain P1031)</name>
    <dbReference type="NCBI Taxonomy" id="488223"/>
    <lineage>
        <taxon>Bacteria</taxon>
        <taxon>Bacillati</taxon>
        <taxon>Bacillota</taxon>
        <taxon>Bacilli</taxon>
        <taxon>Lactobacillales</taxon>
        <taxon>Streptococcaceae</taxon>
        <taxon>Streptococcus</taxon>
    </lineage>
</organism>
<proteinExistence type="inferred from homology"/>
<name>ATPA_STRZP</name>
<keyword id="KW-0066">ATP synthesis</keyword>
<keyword id="KW-0067">ATP-binding</keyword>
<keyword id="KW-1003">Cell membrane</keyword>
<keyword id="KW-0139">CF(1)</keyword>
<keyword id="KW-0375">Hydrogen ion transport</keyword>
<keyword id="KW-0406">Ion transport</keyword>
<keyword id="KW-0472">Membrane</keyword>
<keyword id="KW-0547">Nucleotide-binding</keyword>
<keyword id="KW-1278">Translocase</keyword>
<keyword id="KW-0813">Transport</keyword>